<gene>
    <name type="primary">UGT709C2</name>
    <name type="synonym">UGT8</name>
</gene>
<keyword id="KW-0328">Glycosyltransferase</keyword>
<keyword id="KW-0808">Transferase</keyword>
<protein>
    <recommendedName>
        <fullName>7-deoxyloganetic acid glucosyltransferase</fullName>
        <ecNumber>2.4.1.323</ecNumber>
    </recommendedName>
    <alternativeName>
        <fullName>UDP-glucose glucosyltransferase 8</fullName>
        <shortName>CrUGT8</shortName>
    </alternativeName>
    <alternativeName>
        <fullName>UDP-glycosyltransferase 709C2</fullName>
    </alternativeName>
</protein>
<reference key="1">
    <citation type="journal article" date="2013" name="Plant Cell">
        <title>A 7-deoxyloganetic Acid glucosyltransferase contributes a key step in secologanin biosynthesis in madagascar periwinkle.</title>
        <authorList>
            <person name="Asada K."/>
            <person name="Salim V."/>
            <person name="Masada-Atsumi S."/>
            <person name="Edmunds E."/>
            <person name="Nagatoshi M."/>
            <person name="Terasaka K."/>
            <person name="Mizukami H."/>
            <person name="De Luca V."/>
        </authorList>
    </citation>
    <scope>NUCLEOTIDE SEQUENCE [MRNA]</scope>
    <scope>FUNCTION</scope>
    <scope>CATALYTIC ACTIVITY</scope>
    <scope>BIOPHYSICOCHEMICAL PROPERTIES</scope>
    <scope>TISSUE SPECIFICITY</scope>
</reference>
<accession>U3U992</accession>
<dbReference type="EC" id="2.4.1.323"/>
<dbReference type="EMBL" id="AB733667">
    <property type="protein sequence ID" value="BAO01109.1"/>
    <property type="molecule type" value="mRNA"/>
</dbReference>
<dbReference type="SMR" id="U3U992"/>
<dbReference type="CAZy" id="GT1">
    <property type="family name" value="Glycosyltransferase Family 1"/>
</dbReference>
<dbReference type="KEGG" id="ag:BAO01109"/>
<dbReference type="BioCyc" id="MetaCyc:MONOMER-18444"/>
<dbReference type="BRENDA" id="2.4.1.323">
    <property type="organism ID" value="1211"/>
</dbReference>
<dbReference type="GO" id="GO:0102970">
    <property type="term" value="F:7-deoxyloganetic acid glucosyltransferase activity"/>
    <property type="evidence" value="ECO:0007669"/>
    <property type="project" value="UniProtKB-EC"/>
</dbReference>
<dbReference type="GO" id="GO:0080043">
    <property type="term" value="F:quercetin 3-O-glucosyltransferase activity"/>
    <property type="evidence" value="ECO:0007669"/>
    <property type="project" value="TreeGrafter"/>
</dbReference>
<dbReference type="GO" id="GO:0080044">
    <property type="term" value="F:quercetin 7-O-glucosyltransferase activity"/>
    <property type="evidence" value="ECO:0007669"/>
    <property type="project" value="TreeGrafter"/>
</dbReference>
<dbReference type="GO" id="GO:0035251">
    <property type="term" value="F:UDP-glucosyltransferase activity"/>
    <property type="evidence" value="ECO:0000314"/>
    <property type="project" value="UniProtKB"/>
</dbReference>
<dbReference type="GO" id="GO:1900994">
    <property type="term" value="P:(-)-secologanin biosynthetic process"/>
    <property type="evidence" value="ECO:0000314"/>
    <property type="project" value="UniProtKB"/>
</dbReference>
<dbReference type="CDD" id="cd03784">
    <property type="entry name" value="GT1_Gtf-like"/>
    <property type="match status" value="1"/>
</dbReference>
<dbReference type="FunFam" id="3.40.50.2000:FF:000065">
    <property type="entry name" value="Glycosyltransferase"/>
    <property type="match status" value="1"/>
</dbReference>
<dbReference type="FunFam" id="3.40.50.2000:FF:000040">
    <property type="entry name" value="UDP-glycosyltransferase 76C1"/>
    <property type="match status" value="1"/>
</dbReference>
<dbReference type="Gene3D" id="3.40.50.2000">
    <property type="entry name" value="Glycogen Phosphorylase B"/>
    <property type="match status" value="2"/>
</dbReference>
<dbReference type="InterPro" id="IPR002213">
    <property type="entry name" value="UDP_glucos_trans"/>
</dbReference>
<dbReference type="InterPro" id="IPR035595">
    <property type="entry name" value="UDP_glycos_trans_CS"/>
</dbReference>
<dbReference type="PANTHER" id="PTHR11926">
    <property type="entry name" value="GLUCOSYL/GLUCURONOSYL TRANSFERASES"/>
    <property type="match status" value="1"/>
</dbReference>
<dbReference type="PANTHER" id="PTHR11926:SF1392">
    <property type="entry name" value="GLYCOSYLTRANSFERASE"/>
    <property type="match status" value="1"/>
</dbReference>
<dbReference type="Pfam" id="PF00201">
    <property type="entry name" value="UDPGT"/>
    <property type="match status" value="1"/>
</dbReference>
<dbReference type="SUPFAM" id="SSF53756">
    <property type="entry name" value="UDP-Glycosyltransferase/glycogen phosphorylase"/>
    <property type="match status" value="1"/>
</dbReference>
<dbReference type="PROSITE" id="PS00375">
    <property type="entry name" value="UDPGT"/>
    <property type="match status" value="1"/>
</dbReference>
<evidence type="ECO:0000250" key="1">
    <source>
        <dbReference type="UniProtKB" id="A0A0A1HA03"/>
    </source>
</evidence>
<evidence type="ECO:0000250" key="2">
    <source>
        <dbReference type="UniProtKB" id="P51094"/>
    </source>
</evidence>
<evidence type="ECO:0000269" key="3">
    <source>
    </source>
</evidence>
<evidence type="ECO:0000305" key="4"/>
<comment type="function">
    <text evidence="3">Iridoid glucosyltransferase acting exclusively on 7-deoxyloganetic acid. No activity with 7-deoxyloganetin. Catalyzes the fourth to last step in secologanin biosynthesis.</text>
</comment>
<comment type="catalytic activity">
    <reaction evidence="3">
        <text>7-deoxyloganetate + UDP-alpha-D-glucose = 7-deoxyloganate + UDP + H(+)</text>
        <dbReference type="Rhea" id="RHEA:39895"/>
        <dbReference type="ChEBI" id="CHEBI:15378"/>
        <dbReference type="ChEBI" id="CHEBI:58223"/>
        <dbReference type="ChEBI" id="CHEBI:58885"/>
        <dbReference type="ChEBI" id="CHEBI:76844"/>
        <dbReference type="ChEBI" id="CHEBI:76846"/>
        <dbReference type="EC" id="2.4.1.323"/>
    </reaction>
</comment>
<comment type="biophysicochemical properties">
    <kinetics>
        <KM evidence="3">0.088 mM for 7-deoxyloganetic acid</KM>
        <KM evidence="3">5.38 mM for UPD-glucose</KM>
        <text>kcat is 0.130 sec(-1) for 7-deoxyloganetic acid. kcat is 0.325 sec(-1) for UPD-glucose.</text>
    </kinetics>
</comment>
<comment type="tissue specificity">
    <text evidence="3">Expressed in leaves, roots and stems. Lower levels of expression in flowers. Preferentially expressed in internal phloem parenchyma cells.</text>
</comment>
<comment type="similarity">
    <text evidence="4">Belongs to the UDP-glycosyltransferase family.</text>
</comment>
<sequence>MGSQETNLAPHVLIFPLPIQGHVNSMLRLAELLCLAELDITFIVSEFSHSRLIKHTNVASRFARYPGFQFQPISDGLPDDHPRAGERVMDILPSTKNVTGPLFKQMMVENKCFSSATRRPITCIIADGVLSFAGDFAQEKGIPLIYFRTVSACSFWACFCMPELIESGDIPIKGNGMDLIVKSVPGMETFLRRRDLPGFCRVNDINEPKLQILKTETRQTTRAQAAILNTFEDLEGPILSQIRKHMPRLFTIGPSHSHLTSRLETKNIKTLISSGSFWEEDRSCVDWLDAQPPRSVLYVSFGSITVVTRDQLLEFWYGLVNSGQRFLWVMRPDSIMGKDGQSQIPADLEEGTKARGYMVGWAPQEEVLNHPAIGGFLTHSGWNSTLESIVAGVPMICWPYFADQMINSRFVSEIWKIGLDMKDTCDRETIVKMVRELMEIRKDEFLQRADHMAKLAKEAVSEGGSSYSNLDGLVDYIKSLII</sequence>
<feature type="chain" id="PRO_0000430135" description="7-deoxyloganetic acid glucosyltransferase">
    <location>
        <begin position="1"/>
        <end position="482"/>
    </location>
</feature>
<feature type="active site" description="Proton acceptor" evidence="1">
    <location>
        <position position="22"/>
    </location>
</feature>
<feature type="active site" description="Charge relay" evidence="1">
    <location>
        <position position="127"/>
    </location>
</feature>
<feature type="binding site" evidence="2">
    <location>
        <position position="22"/>
    </location>
    <ligand>
        <name>an anthocyanidin</name>
        <dbReference type="ChEBI" id="CHEBI:143576"/>
    </ligand>
</feature>
<feature type="binding site" evidence="1">
    <location>
        <position position="149"/>
    </location>
    <ligand>
        <name>UDP-alpha-D-glucose</name>
        <dbReference type="ChEBI" id="CHEBI:58885"/>
    </ligand>
</feature>
<feature type="binding site" evidence="1">
    <location>
        <position position="362"/>
    </location>
    <ligand>
        <name>UDP-alpha-D-glucose</name>
        <dbReference type="ChEBI" id="CHEBI:58885"/>
    </ligand>
</feature>
<feature type="binding site" evidence="1">
    <location>
        <position position="364"/>
    </location>
    <ligand>
        <name>UDP-alpha-D-glucose</name>
        <dbReference type="ChEBI" id="CHEBI:58885"/>
    </ligand>
</feature>
<feature type="binding site" evidence="1">
    <location>
        <position position="379"/>
    </location>
    <ligand>
        <name>UDP-alpha-D-glucose</name>
        <dbReference type="ChEBI" id="CHEBI:58885"/>
    </ligand>
</feature>
<feature type="binding site" evidence="1">
    <location>
        <position position="382"/>
    </location>
    <ligand>
        <name>UDP-alpha-D-glucose</name>
        <dbReference type="ChEBI" id="CHEBI:58885"/>
    </ligand>
</feature>
<feature type="binding site" evidence="1">
    <location>
        <position position="383"/>
    </location>
    <ligand>
        <name>UDP-alpha-D-glucose</name>
        <dbReference type="ChEBI" id="CHEBI:58885"/>
    </ligand>
</feature>
<feature type="binding site" evidence="1">
    <location>
        <position position="384"/>
    </location>
    <ligand>
        <name>UDP-alpha-D-glucose</name>
        <dbReference type="ChEBI" id="CHEBI:58885"/>
    </ligand>
</feature>
<feature type="binding site" evidence="1">
    <location>
        <position position="387"/>
    </location>
    <ligand>
        <name>UDP-alpha-D-glucose</name>
        <dbReference type="ChEBI" id="CHEBI:58885"/>
    </ligand>
</feature>
<feature type="binding site" evidence="2">
    <location>
        <position position="402"/>
    </location>
    <ligand>
        <name>an anthocyanidin</name>
        <dbReference type="ChEBI" id="CHEBI:143576"/>
    </ligand>
</feature>
<feature type="binding site" evidence="1">
    <location>
        <position position="403"/>
    </location>
    <ligand>
        <name>UDP-alpha-D-glucose</name>
        <dbReference type="ChEBI" id="CHEBI:58885"/>
    </ligand>
</feature>
<feature type="binding site" evidence="1">
    <location>
        <position position="404"/>
    </location>
    <ligand>
        <name>UDP-alpha-D-glucose</name>
        <dbReference type="ChEBI" id="CHEBI:58885"/>
    </ligand>
</feature>
<organism>
    <name type="scientific">Catharanthus roseus</name>
    <name type="common">Madagascar periwinkle</name>
    <name type="synonym">Vinca rosea</name>
    <dbReference type="NCBI Taxonomy" id="4058"/>
    <lineage>
        <taxon>Eukaryota</taxon>
        <taxon>Viridiplantae</taxon>
        <taxon>Streptophyta</taxon>
        <taxon>Embryophyta</taxon>
        <taxon>Tracheophyta</taxon>
        <taxon>Spermatophyta</taxon>
        <taxon>Magnoliopsida</taxon>
        <taxon>eudicotyledons</taxon>
        <taxon>Gunneridae</taxon>
        <taxon>Pentapetalae</taxon>
        <taxon>asterids</taxon>
        <taxon>lamiids</taxon>
        <taxon>Gentianales</taxon>
        <taxon>Apocynaceae</taxon>
        <taxon>Rauvolfioideae</taxon>
        <taxon>Vinceae</taxon>
        <taxon>Catharanthinae</taxon>
        <taxon>Catharanthus</taxon>
    </lineage>
</organism>
<proteinExistence type="evidence at protein level"/>
<name>UGT8_CATRO</name>